<sequence length="682" mass="77451">MLPELSAIQAEMQQQGLRRLLVLSGDHNWCHQQAHELQQEFMGDWLWISYRKEKAVLPEKAAGLLGQEYLHGVFDATEGLNAEALAILAGTLKAGSWLVMMVPSWHQWNDQPDRDSIRWNEQSGAIPTPNFIQHIQRQIANDRQVLLWRQNDPFYIPELPQYREWQLPDGQPTAHQHTILARLLRANQGVWVIIAPRGRGKSTLAGMLIQQWQGHCWLTAPAKATTEVVRCYSSEKGQFWAVDNLLKYCRQNSVSDIDWLLIDEAAAIPTPQLFELISYFPRILLTTTVQGYEGTGRGFLHKFCAEIPGCHILNLTEPMRWAESDPLENWLEEALLFDDAVPANHSAKAIGYHVYQQQQWIQQPELLKQFYGILTSAHYKTSPLDLRRLLDAKGMQFVAALGNNTLIGALWMVEEGGLSAELAHEIWAGRRRPRGNLVAQSLAAHSGLPQAAVLKSQRISRVAVQVNRRRQGIAQGMIAFQRERAEEQGMDFISVSFGYTAELWALWQKCGFQLVRIGTHLEASSGCYTAMAIFPLSQQGIALCVQAQQQLARDAYWLESQIGFSLPVDDQADQRLNQNDWQELAGFAFAHRPLSASLPALQRLLLNCGLPLTALRNHLQREMSIEQCVTELRLNGHKALTLLWRQETAQALVSLDEKLAMYWQEWTTVFSEANRLHHPICH</sequence>
<reference key="1">
    <citation type="journal article" date="2009" name="BMC Genomics">
        <title>Comparative genomics of the emerging human pathogen Photorhabdus asymbiotica with the insect pathogen Photorhabdus luminescens.</title>
        <authorList>
            <person name="Wilkinson P."/>
            <person name="Waterfield N.R."/>
            <person name="Crossman L."/>
            <person name="Corton C."/>
            <person name="Sanchez-Contreras M."/>
            <person name="Vlisidou I."/>
            <person name="Barron A."/>
            <person name="Bignell A."/>
            <person name="Clark L."/>
            <person name="Ormond D."/>
            <person name="Mayho M."/>
            <person name="Bason N."/>
            <person name="Smith F."/>
            <person name="Simmonds M."/>
            <person name="Churcher C."/>
            <person name="Harris D."/>
            <person name="Thompson N.R."/>
            <person name="Quail M."/>
            <person name="Parkhill J."/>
            <person name="ffrench-Constant R.H."/>
        </authorList>
    </citation>
    <scope>NUCLEOTIDE SEQUENCE [LARGE SCALE GENOMIC DNA]</scope>
    <source>
        <strain>ATCC 43949 / 3105-77</strain>
    </source>
</reference>
<organism>
    <name type="scientific">Photorhabdus asymbiotica subsp. asymbiotica (strain ATCC 43949 / 3105-77)</name>
    <name type="common">Xenorhabdus luminescens (strain 2)</name>
    <dbReference type="NCBI Taxonomy" id="553480"/>
    <lineage>
        <taxon>Bacteria</taxon>
        <taxon>Pseudomonadati</taxon>
        <taxon>Pseudomonadota</taxon>
        <taxon>Gammaproteobacteria</taxon>
        <taxon>Enterobacterales</taxon>
        <taxon>Morganellaceae</taxon>
        <taxon>Photorhabdus</taxon>
    </lineage>
</organism>
<feature type="chain" id="PRO_0000403123" description="tRNA(Met) cytidine acetyltransferase TmcA">
    <location>
        <begin position="1"/>
        <end position="682"/>
    </location>
</feature>
<feature type="domain" description="N-acetyltransferase" evidence="1">
    <location>
        <begin position="357"/>
        <end position="534"/>
    </location>
</feature>
<feature type="binding site" evidence="1">
    <location>
        <position position="176"/>
    </location>
    <ligand>
        <name>ATP</name>
        <dbReference type="ChEBI" id="CHEBI:30616"/>
    </ligand>
</feature>
<feature type="binding site" evidence="1">
    <location>
        <begin position="198"/>
        <end position="207"/>
    </location>
    <ligand>
        <name>ATP</name>
        <dbReference type="ChEBI" id="CHEBI:30616"/>
    </ligand>
</feature>
<feature type="binding site" evidence="1">
    <location>
        <position position="320"/>
    </location>
    <ligand>
        <name>ATP</name>
        <dbReference type="ChEBI" id="CHEBI:30616"/>
    </ligand>
</feature>
<feature type="binding site" evidence="1">
    <location>
        <begin position="462"/>
        <end position="464"/>
    </location>
    <ligand>
        <name>acetyl-CoA</name>
        <dbReference type="ChEBI" id="CHEBI:57288"/>
    </ligand>
</feature>
<feature type="binding site" evidence="1">
    <location>
        <position position="502"/>
    </location>
    <ligand>
        <name>acetyl-CoA</name>
        <dbReference type="ChEBI" id="CHEBI:57288"/>
    </ligand>
</feature>
<evidence type="ECO:0000255" key="1">
    <source>
        <dbReference type="HAMAP-Rule" id="MF_01886"/>
    </source>
</evidence>
<gene>
    <name evidence="1" type="primary">tmcA</name>
    <name type="ordered locus">PAU_01814</name>
</gene>
<keyword id="KW-0012">Acyltransferase</keyword>
<keyword id="KW-0067">ATP-binding</keyword>
<keyword id="KW-0963">Cytoplasm</keyword>
<keyword id="KW-0547">Nucleotide-binding</keyword>
<keyword id="KW-0694">RNA-binding</keyword>
<keyword id="KW-0808">Transferase</keyword>
<keyword id="KW-0819">tRNA processing</keyword>
<keyword id="KW-0820">tRNA-binding</keyword>
<protein>
    <recommendedName>
        <fullName evidence="1">tRNA(Met) cytidine acetyltransferase TmcA</fullName>
        <ecNumber evidence="1">2.3.1.193</ecNumber>
    </recommendedName>
</protein>
<dbReference type="EC" id="2.3.1.193" evidence="1"/>
<dbReference type="EMBL" id="FM162591">
    <property type="protein sequence ID" value="CAQ83906.1"/>
    <property type="molecule type" value="Genomic_DNA"/>
</dbReference>
<dbReference type="SMR" id="C7BGY4"/>
<dbReference type="STRING" id="291112.PAU_01814"/>
<dbReference type="KEGG" id="pay:PAU_01814"/>
<dbReference type="eggNOG" id="COG1444">
    <property type="taxonomic scope" value="Bacteria"/>
</dbReference>
<dbReference type="Proteomes" id="UP000002747">
    <property type="component" value="Chromosome"/>
</dbReference>
<dbReference type="GO" id="GO:0005737">
    <property type="term" value="C:cytoplasm"/>
    <property type="evidence" value="ECO:0007669"/>
    <property type="project" value="UniProtKB-SubCell"/>
</dbReference>
<dbReference type="GO" id="GO:1990883">
    <property type="term" value="F:18S rRNA cytidine N-acetyltransferase activity"/>
    <property type="evidence" value="ECO:0007669"/>
    <property type="project" value="TreeGrafter"/>
</dbReference>
<dbReference type="GO" id="GO:0005524">
    <property type="term" value="F:ATP binding"/>
    <property type="evidence" value="ECO:0007669"/>
    <property type="project" value="UniProtKB-UniRule"/>
</dbReference>
<dbReference type="GO" id="GO:0000049">
    <property type="term" value="F:tRNA binding"/>
    <property type="evidence" value="ECO:0007669"/>
    <property type="project" value="UniProtKB-UniRule"/>
</dbReference>
<dbReference type="GO" id="GO:0051392">
    <property type="term" value="F:tRNA N4-acetyltransferase activity"/>
    <property type="evidence" value="ECO:0007669"/>
    <property type="project" value="UniProtKB-UniRule"/>
</dbReference>
<dbReference type="GO" id="GO:1904812">
    <property type="term" value="P:rRNA acetylation involved in maturation of SSU-rRNA"/>
    <property type="evidence" value="ECO:0007669"/>
    <property type="project" value="TreeGrafter"/>
</dbReference>
<dbReference type="GO" id="GO:0051391">
    <property type="term" value="P:tRNA acetylation"/>
    <property type="evidence" value="ECO:0007669"/>
    <property type="project" value="UniProtKB-UniRule"/>
</dbReference>
<dbReference type="GO" id="GO:0002101">
    <property type="term" value="P:tRNA wobble cytosine modification"/>
    <property type="evidence" value="ECO:0007669"/>
    <property type="project" value="UniProtKB-UniRule"/>
</dbReference>
<dbReference type="FunFam" id="3.40.50.11040:FF:000003">
    <property type="entry name" value="tRNA(Met) cytidine acetyltransferase TmcA"/>
    <property type="match status" value="1"/>
</dbReference>
<dbReference type="FunFam" id="3.40.50.300:FF:001011">
    <property type="entry name" value="tRNA(Met) cytidine acetyltransferase TmcA"/>
    <property type="match status" value="1"/>
</dbReference>
<dbReference type="FunFam" id="3.40.630.30:FF:000054">
    <property type="entry name" value="tRNA(Met) cytidine acetyltransferase TmcA"/>
    <property type="match status" value="1"/>
</dbReference>
<dbReference type="Gene3D" id="3.40.50.11040">
    <property type="match status" value="1"/>
</dbReference>
<dbReference type="Gene3D" id="3.40.630.30">
    <property type="match status" value="1"/>
</dbReference>
<dbReference type="Gene3D" id="3.40.50.300">
    <property type="entry name" value="P-loop containing nucleotide triphosphate hydrolases"/>
    <property type="match status" value="1"/>
</dbReference>
<dbReference type="Gene3D" id="1.20.120.890">
    <property type="entry name" value="tRNA(Met) cytidine acetyltransferase, tail domain"/>
    <property type="match status" value="1"/>
</dbReference>
<dbReference type="HAMAP" id="MF_01886">
    <property type="entry name" value="tRNA_acetyltr_TmcA"/>
    <property type="match status" value="1"/>
</dbReference>
<dbReference type="InterPro" id="IPR016181">
    <property type="entry name" value="Acyl_CoA_acyltransferase"/>
</dbReference>
<dbReference type="InterPro" id="IPR000182">
    <property type="entry name" value="GNAT_dom"/>
</dbReference>
<dbReference type="InterPro" id="IPR007807">
    <property type="entry name" value="NAT10/TcmA_helicase"/>
</dbReference>
<dbReference type="InterPro" id="IPR027417">
    <property type="entry name" value="P-loop_NTPase"/>
</dbReference>
<dbReference type="InterPro" id="IPR032672">
    <property type="entry name" value="TmcA/NAT10/Kre33"/>
</dbReference>
<dbReference type="InterPro" id="IPR038321">
    <property type="entry name" value="TmcA_C_sf"/>
</dbReference>
<dbReference type="InterPro" id="IPR013562">
    <property type="entry name" value="TmcA_N"/>
</dbReference>
<dbReference type="InterPro" id="IPR033442">
    <property type="entry name" value="TmcA_tRNA_bind"/>
</dbReference>
<dbReference type="InterPro" id="IPR024914">
    <property type="entry name" value="tRNA_acetyltr_TmcA"/>
</dbReference>
<dbReference type="PANTHER" id="PTHR10925">
    <property type="entry name" value="N-ACETYLTRANSFERASE 10"/>
    <property type="match status" value="1"/>
</dbReference>
<dbReference type="PANTHER" id="PTHR10925:SF5">
    <property type="entry name" value="RNA CYTIDINE ACETYLTRANSFERASE"/>
    <property type="match status" value="1"/>
</dbReference>
<dbReference type="Pfam" id="PF13718">
    <property type="entry name" value="GNAT_acetyltr_2"/>
    <property type="match status" value="1"/>
</dbReference>
<dbReference type="Pfam" id="PF05127">
    <property type="entry name" value="NAT10_TcmA_helicase"/>
    <property type="match status" value="1"/>
</dbReference>
<dbReference type="Pfam" id="PF08351">
    <property type="entry name" value="TmcA_N"/>
    <property type="match status" value="1"/>
</dbReference>
<dbReference type="Pfam" id="PF17176">
    <property type="entry name" value="tRNA_bind_3"/>
    <property type="match status" value="1"/>
</dbReference>
<dbReference type="SUPFAM" id="SSF55729">
    <property type="entry name" value="Acyl-CoA N-acyltransferases (Nat)"/>
    <property type="match status" value="1"/>
</dbReference>
<dbReference type="SUPFAM" id="SSF52540">
    <property type="entry name" value="P-loop containing nucleoside triphosphate hydrolases"/>
    <property type="match status" value="1"/>
</dbReference>
<proteinExistence type="inferred from homology"/>
<name>TMCA_PHOAA</name>
<accession>C7BGY4</accession>
<comment type="function">
    <text evidence="1">Catalyzes the formation of N(4)-acetylcytidine (ac(4)C) at the wobble position of tRNA(Met), by using acetyl-CoA as an acetyl donor and ATP (or GTP).</text>
</comment>
<comment type="catalytic activity">
    <reaction evidence="1">
        <text>cytidine(34) in elongator tRNA(Met) + acetyl-CoA + ATP + H2O = N(4)-acetylcytidine(34) in elongator tRNA(Met) + ADP + phosphate + CoA + H(+)</text>
        <dbReference type="Rhea" id="RHEA:43788"/>
        <dbReference type="Rhea" id="RHEA-COMP:10693"/>
        <dbReference type="Rhea" id="RHEA-COMP:10694"/>
        <dbReference type="ChEBI" id="CHEBI:15377"/>
        <dbReference type="ChEBI" id="CHEBI:15378"/>
        <dbReference type="ChEBI" id="CHEBI:30616"/>
        <dbReference type="ChEBI" id="CHEBI:43474"/>
        <dbReference type="ChEBI" id="CHEBI:57287"/>
        <dbReference type="ChEBI" id="CHEBI:57288"/>
        <dbReference type="ChEBI" id="CHEBI:74900"/>
        <dbReference type="ChEBI" id="CHEBI:82748"/>
        <dbReference type="ChEBI" id="CHEBI:456216"/>
        <dbReference type="EC" id="2.3.1.193"/>
    </reaction>
</comment>
<comment type="subcellular location">
    <subcellularLocation>
        <location evidence="1">Cytoplasm</location>
    </subcellularLocation>
</comment>
<comment type="similarity">
    <text evidence="1">Belongs to the RNA cytidine acetyltransferase family. TmcA subfamily.</text>
</comment>